<comment type="function">
    <text>Removal of H(2)O(2), oxidation of toxic reductants, biosynthesis and degradation of lignin, suberization, auxin catabolism, response to environmental stresses such as wounding, pathogen attack and oxidative stress. These functions might be dependent on each isozyme/isoform in each plant tissue.</text>
</comment>
<comment type="function">
    <text>Closely linked to lignin formation by showing monolignol substrate specificity.</text>
</comment>
<comment type="catalytic activity">
    <reaction>
        <text>2 a phenolic donor + H2O2 = 2 a phenolic radical donor + 2 H2O</text>
        <dbReference type="Rhea" id="RHEA:56136"/>
        <dbReference type="ChEBI" id="CHEBI:15377"/>
        <dbReference type="ChEBI" id="CHEBI:16240"/>
        <dbReference type="ChEBI" id="CHEBI:139520"/>
        <dbReference type="ChEBI" id="CHEBI:139521"/>
        <dbReference type="EC" id="1.11.1.7"/>
    </reaction>
</comment>
<comment type="cofactor">
    <cofactor>
        <name>Ca(2+)</name>
        <dbReference type="ChEBI" id="CHEBI:29108"/>
    </cofactor>
    <text>Binds 2 calcium ions per subunit.</text>
</comment>
<comment type="cofactor">
    <cofactor>
        <name>heme b</name>
        <dbReference type="ChEBI" id="CHEBI:60344"/>
    </cofactor>
    <text>Binds 1 heme b (iron(II)-protoporphyrin IX) group per subunit.</text>
</comment>
<comment type="subcellular location">
    <subcellularLocation>
        <location evidence="2">Secreted</location>
    </subcellularLocation>
</comment>
<comment type="tissue specificity">
    <text>Mainly expressed in roots.</text>
</comment>
<comment type="miscellaneous">
    <text>There are 73 peroxidase genes in A.thaliana.</text>
</comment>
<comment type="similarity">
    <text evidence="2">Belongs to the peroxidase family. Classical plant (class III) peroxidase subfamily.</text>
</comment>
<keyword id="KW-0002">3D-structure</keyword>
<keyword id="KW-0106">Calcium</keyword>
<keyword id="KW-1015">Disulfide bond</keyword>
<keyword id="KW-0325">Glycoprotein</keyword>
<keyword id="KW-0349">Heme</keyword>
<keyword id="KW-0376">Hydrogen peroxide</keyword>
<keyword id="KW-0408">Iron</keyword>
<keyword id="KW-0479">Metal-binding</keyword>
<keyword id="KW-0560">Oxidoreductase</keyword>
<keyword id="KW-0575">Peroxidase</keyword>
<keyword id="KW-0873">Pyrrolidone carboxylic acid</keyword>
<keyword id="KW-1185">Reference proteome</keyword>
<keyword id="KW-0964">Secreted</keyword>
<keyword id="KW-0732">Signal</keyword>
<sequence length="335" mass="34989">MAVTNLPTCDGLFIISLIVIVSSIFGTSSAQLNATFYSGTCPNASAIVRSTIQQALQSDTRIGASLIRLHFHDCFVNGCDASILLDDTGSIQSEKNAGPNVNSARGFNVVDNIKTALENACPGVVSCSDVLALASEASVSLAGGPSWTVLLGRRDSLTANLAGANSSIPSPIESLSNITFKFSAVGLNTNDLVALSGAHTFGRARCGVFNNRLFNFSGTGNPDPTLNSTLLSTLQQLCPQNGSASTITNLDLSTPDAFDNNYFANLQSNDGLLQSDQELFSTTGSSTIAIVTSFASNQTLFFQAFAQSMINMGNISPLTGSNGEIRLDCKKVNGS</sequence>
<reference key="1">
    <citation type="journal article" date="1996" name="FEBS Lett.">
        <title>Structure and organ specificity of an anionic peroxidase from Arabidopsis thaliana cell suspension culture.</title>
        <authorList>
            <person name="Oestergaard L."/>
            <person name="Abelskov A.K."/>
            <person name="Mattsson O."/>
            <person name="Welinder K.G."/>
        </authorList>
    </citation>
    <scope>NUCLEOTIDE SEQUENCE [MRNA]</scope>
    <scope>PYROGLUTAMATE FORMATION AT GLN-31</scope>
    <source>
        <strain>cv. Columbia</strain>
    </source>
</reference>
<reference key="2">
    <citation type="submission" date="2000-05" db="EMBL/GenBank/DDBJ databases">
        <title>Structural analysis of Arabidopsis thaliana chromosome 5. XI.</title>
        <authorList>
            <person name="Kaneko T."/>
            <person name="Katoh T."/>
            <person name="Asamizu E."/>
            <person name="Sato S."/>
            <person name="Nakamura Y."/>
            <person name="Kotani H."/>
            <person name="Tabata S."/>
        </authorList>
    </citation>
    <scope>NUCLEOTIDE SEQUENCE [LARGE SCALE GENOMIC DNA]</scope>
    <source>
        <strain>cv. Columbia</strain>
    </source>
</reference>
<reference key="3">
    <citation type="journal article" date="2017" name="Plant J.">
        <title>Araport11: a complete reannotation of the Arabidopsis thaliana reference genome.</title>
        <authorList>
            <person name="Cheng C.Y."/>
            <person name="Krishnakumar V."/>
            <person name="Chan A.P."/>
            <person name="Thibaud-Nissen F."/>
            <person name="Schobel S."/>
            <person name="Town C.D."/>
        </authorList>
    </citation>
    <scope>GENOME REANNOTATION</scope>
    <source>
        <strain>cv. Columbia</strain>
    </source>
</reference>
<reference key="4">
    <citation type="journal article" date="2003" name="Science">
        <title>Empirical analysis of transcriptional activity in the Arabidopsis genome.</title>
        <authorList>
            <person name="Yamada K."/>
            <person name="Lim J."/>
            <person name="Dale J.M."/>
            <person name="Chen H."/>
            <person name="Shinn P."/>
            <person name="Palm C.J."/>
            <person name="Southwick A.M."/>
            <person name="Wu H.C."/>
            <person name="Kim C.J."/>
            <person name="Nguyen M."/>
            <person name="Pham P.K."/>
            <person name="Cheuk R.F."/>
            <person name="Karlin-Newmann G."/>
            <person name="Liu S.X."/>
            <person name="Lam B."/>
            <person name="Sakano H."/>
            <person name="Wu T."/>
            <person name="Yu G."/>
            <person name="Miranda M."/>
            <person name="Quach H.L."/>
            <person name="Tripp M."/>
            <person name="Chang C.H."/>
            <person name="Lee J.M."/>
            <person name="Toriumi M.J."/>
            <person name="Chan M.M."/>
            <person name="Tang C.C."/>
            <person name="Onodera C.S."/>
            <person name="Deng J.M."/>
            <person name="Akiyama K."/>
            <person name="Ansari Y."/>
            <person name="Arakawa T."/>
            <person name="Banh J."/>
            <person name="Banno F."/>
            <person name="Bowser L."/>
            <person name="Brooks S.Y."/>
            <person name="Carninci P."/>
            <person name="Chao Q."/>
            <person name="Choy N."/>
            <person name="Enju A."/>
            <person name="Goldsmith A.D."/>
            <person name="Gurjal M."/>
            <person name="Hansen N.F."/>
            <person name="Hayashizaki Y."/>
            <person name="Johnson-Hopson C."/>
            <person name="Hsuan V.W."/>
            <person name="Iida K."/>
            <person name="Karnes M."/>
            <person name="Khan S."/>
            <person name="Koesema E."/>
            <person name="Ishida J."/>
            <person name="Jiang P.X."/>
            <person name="Jones T."/>
            <person name="Kawai J."/>
            <person name="Kamiya A."/>
            <person name="Meyers C."/>
            <person name="Nakajima M."/>
            <person name="Narusaka M."/>
            <person name="Seki M."/>
            <person name="Sakurai T."/>
            <person name="Satou M."/>
            <person name="Tamse R."/>
            <person name="Vaysberg M."/>
            <person name="Wallender E.K."/>
            <person name="Wong C."/>
            <person name="Yamamura Y."/>
            <person name="Yuan S."/>
            <person name="Shinozaki K."/>
            <person name="Davis R.W."/>
            <person name="Theologis A."/>
            <person name="Ecker J.R."/>
        </authorList>
    </citation>
    <scope>NUCLEOTIDE SEQUENCE [LARGE SCALE MRNA]</scope>
    <source>
        <strain>cv. Columbia</strain>
    </source>
</reference>
<reference key="5">
    <citation type="submission" date="2002-03" db="EMBL/GenBank/DDBJ databases">
        <title>Full-length cDNA from Arabidopsis thaliana.</title>
        <authorList>
            <person name="Brover V.V."/>
            <person name="Troukhan M.E."/>
            <person name="Alexandrov N.A."/>
            <person name="Lu Y.-P."/>
            <person name="Flavell R.B."/>
            <person name="Feldmann K.A."/>
        </authorList>
    </citation>
    <scope>NUCLEOTIDE SEQUENCE [LARGE SCALE MRNA]</scope>
</reference>
<reference key="6">
    <citation type="journal article" date="1998" name="FEBS Lett.">
        <title>Computational analyses and annotations of the Arabidopsis peroxidase gene family.</title>
        <authorList>
            <person name="Oestergaard L."/>
            <person name="Pedersen A.G."/>
            <person name="Jespersen H.M."/>
            <person name="Brunak S."/>
            <person name="Welinder K.G."/>
        </authorList>
    </citation>
    <scope>CHARACTERIZATION</scope>
    <source>
        <strain>cv. Columbia</strain>
    </source>
</reference>
<reference key="7">
    <citation type="journal article" date="2000" name="Plant Mol. Biol.">
        <title>Arabidopsis ATP A2 peroxidase. Expression and high-resolution structure of a plant peroxidase with implications for lignification.</title>
        <authorList>
            <person name="Oestergaard L."/>
            <person name="Teilum K."/>
            <person name="Mirza O."/>
            <person name="Mattsson O."/>
            <person name="Petersen M."/>
            <person name="Welinder K.G."/>
            <person name="Mundy J."/>
            <person name="Gajhede M."/>
            <person name="Henriksen A."/>
        </authorList>
    </citation>
    <scope>X-RAY CRYSTALLOGRAPHY (1.45 ANGSTROMS)</scope>
    <source>
        <strain>cv. Columbia</strain>
    </source>
</reference>
<reference key="8">
    <citation type="journal article" date="2001" name="Biochemistry">
        <title>Differential activity and structure of highly similar peroxidases. Spectroscopic, crystallographic, and enzymatic analyses of lignifying Arabidopsis thaliana peroxidase A2 and horseradish peroxidase A2.</title>
        <authorList>
            <person name="Nielsen K.L."/>
            <person name="Indiani C."/>
            <person name="Henriksen A."/>
            <person name="Feis A."/>
            <person name="Becucci M."/>
            <person name="Gajhede M."/>
            <person name="Smulevich G."/>
            <person name="Welinder K.G."/>
        </authorList>
    </citation>
    <scope>X-RAY CRYSTALLOGRAPHY (3 ANGSTROMS)</scope>
    <source>
        <strain>cv. Columbia</strain>
    </source>
</reference>
<reference key="9">
    <citation type="journal article" date="2002" name="Gene">
        <title>Analysis and expression of the class III peroxidase large gene family in Arabidopsis thaliana.</title>
        <authorList>
            <person name="Tognolli M."/>
            <person name="Penel C."/>
            <person name="Greppin H."/>
            <person name="Simon P."/>
        </authorList>
    </citation>
    <scope>GENE FAMILY ORGANIZATION</scope>
    <scope>NOMENCLATURE</scope>
    <source>
        <strain>cv. Columbia</strain>
    </source>
</reference>
<dbReference type="EC" id="1.11.1.7"/>
<dbReference type="EMBL" id="X99952">
    <property type="protein sequence ID" value="CAA68212.1"/>
    <property type="molecule type" value="mRNA"/>
</dbReference>
<dbReference type="EMBL" id="AP002032">
    <property type="protein sequence ID" value="BAB09806.1"/>
    <property type="molecule type" value="Genomic_DNA"/>
</dbReference>
<dbReference type="EMBL" id="CP002688">
    <property type="protein sequence ID" value="AED91055.1"/>
    <property type="molecule type" value="Genomic_DNA"/>
</dbReference>
<dbReference type="EMBL" id="AY056186">
    <property type="protein sequence ID" value="AAL07035.1"/>
    <property type="molecule type" value="mRNA"/>
</dbReference>
<dbReference type="EMBL" id="AY096713">
    <property type="protein sequence ID" value="AAM20347.1"/>
    <property type="molecule type" value="mRNA"/>
</dbReference>
<dbReference type="EMBL" id="AY087674">
    <property type="protein sequence ID" value="AAM65211.1"/>
    <property type="molecule type" value="mRNA"/>
</dbReference>
<dbReference type="RefSeq" id="NP_196290.1">
    <property type="nucleotide sequence ID" value="NM_120755.3"/>
</dbReference>
<dbReference type="PDB" id="1PA2">
    <property type="method" value="X-ray"/>
    <property type="resolution" value="1.45 A"/>
    <property type="chains" value="A=31-335"/>
</dbReference>
<dbReference type="PDB" id="1QO4">
    <property type="method" value="X-ray"/>
    <property type="resolution" value="3.00 A"/>
    <property type="chains" value="A=31-335"/>
</dbReference>
<dbReference type="PDBsum" id="1PA2"/>
<dbReference type="PDBsum" id="1QO4"/>
<dbReference type="SMR" id="Q42578"/>
<dbReference type="FunCoup" id="Q42578">
    <property type="interactions" value="141"/>
</dbReference>
<dbReference type="STRING" id="3702.Q42578"/>
<dbReference type="PeroxiBase" id="219">
    <property type="entry name" value="AtPrx53"/>
</dbReference>
<dbReference type="GlyCosmos" id="Q42578">
    <property type="glycosylation" value="8 sites, No reported glycans"/>
</dbReference>
<dbReference type="GlyGen" id="Q42578">
    <property type="glycosylation" value="8 sites"/>
</dbReference>
<dbReference type="PaxDb" id="3702-AT5G06720.1"/>
<dbReference type="ProteomicsDB" id="236784"/>
<dbReference type="EnsemblPlants" id="AT5G06720.1">
    <property type="protein sequence ID" value="AT5G06720.1"/>
    <property type="gene ID" value="AT5G06720"/>
</dbReference>
<dbReference type="GeneID" id="830561"/>
<dbReference type="Gramene" id="AT5G06720.1">
    <property type="protein sequence ID" value="AT5G06720.1"/>
    <property type="gene ID" value="AT5G06720"/>
</dbReference>
<dbReference type="KEGG" id="ath:AT5G06720"/>
<dbReference type="Araport" id="AT5G06720"/>
<dbReference type="TAIR" id="AT5G06720">
    <property type="gene designation" value="PA2"/>
</dbReference>
<dbReference type="eggNOG" id="ENOG502QVXS">
    <property type="taxonomic scope" value="Eukaryota"/>
</dbReference>
<dbReference type="HOGENOM" id="CLU_010543_0_1_1"/>
<dbReference type="InParanoid" id="Q42578"/>
<dbReference type="OMA" id="RAPCAQT"/>
<dbReference type="OrthoDB" id="2113341at2759"/>
<dbReference type="PhylomeDB" id="Q42578"/>
<dbReference type="BioCyc" id="ARA:AT5G06720-MONOMER"/>
<dbReference type="EvolutionaryTrace" id="Q42578"/>
<dbReference type="PRO" id="PR:Q42578"/>
<dbReference type="Proteomes" id="UP000006548">
    <property type="component" value="Chromosome 5"/>
</dbReference>
<dbReference type="ExpressionAtlas" id="Q42578">
    <property type="expression patterns" value="baseline and differential"/>
</dbReference>
<dbReference type="GO" id="GO:0005576">
    <property type="term" value="C:extracellular region"/>
    <property type="evidence" value="ECO:0007669"/>
    <property type="project" value="UniProtKB-SubCell"/>
</dbReference>
<dbReference type="GO" id="GO:0005794">
    <property type="term" value="C:Golgi apparatus"/>
    <property type="evidence" value="ECO:0007005"/>
    <property type="project" value="TAIR"/>
</dbReference>
<dbReference type="GO" id="GO:0020037">
    <property type="term" value="F:heme binding"/>
    <property type="evidence" value="ECO:0007669"/>
    <property type="project" value="InterPro"/>
</dbReference>
<dbReference type="GO" id="GO:0140825">
    <property type="term" value="F:lactoperoxidase activity"/>
    <property type="evidence" value="ECO:0007669"/>
    <property type="project" value="UniProtKB-EC"/>
</dbReference>
<dbReference type="GO" id="GO:0046872">
    <property type="term" value="F:metal ion binding"/>
    <property type="evidence" value="ECO:0007669"/>
    <property type="project" value="UniProtKB-KW"/>
</dbReference>
<dbReference type="GO" id="GO:0002215">
    <property type="term" value="P:defense response to nematode"/>
    <property type="evidence" value="ECO:0000315"/>
    <property type="project" value="TAIR"/>
</dbReference>
<dbReference type="GO" id="GO:0009908">
    <property type="term" value="P:flower development"/>
    <property type="evidence" value="ECO:0000315"/>
    <property type="project" value="TAIR"/>
</dbReference>
<dbReference type="GO" id="GO:0042744">
    <property type="term" value="P:hydrogen peroxide catabolic process"/>
    <property type="evidence" value="ECO:0007669"/>
    <property type="project" value="UniProtKB-KW"/>
</dbReference>
<dbReference type="GO" id="GO:0006979">
    <property type="term" value="P:response to oxidative stress"/>
    <property type="evidence" value="ECO:0007669"/>
    <property type="project" value="InterPro"/>
</dbReference>
<dbReference type="CDD" id="cd00693">
    <property type="entry name" value="secretory_peroxidase"/>
    <property type="match status" value="1"/>
</dbReference>
<dbReference type="FunFam" id="1.10.420.10:FF:000001">
    <property type="entry name" value="Peroxidase"/>
    <property type="match status" value="1"/>
</dbReference>
<dbReference type="FunFam" id="1.10.520.10:FF:000001">
    <property type="entry name" value="Peroxidase"/>
    <property type="match status" value="1"/>
</dbReference>
<dbReference type="Gene3D" id="1.10.520.10">
    <property type="match status" value="1"/>
</dbReference>
<dbReference type="Gene3D" id="1.10.420.10">
    <property type="entry name" value="Peroxidase, domain 2"/>
    <property type="match status" value="1"/>
</dbReference>
<dbReference type="InterPro" id="IPR002016">
    <property type="entry name" value="Haem_peroxidase"/>
</dbReference>
<dbReference type="InterPro" id="IPR010255">
    <property type="entry name" value="Haem_peroxidase_sf"/>
</dbReference>
<dbReference type="InterPro" id="IPR000823">
    <property type="entry name" value="Peroxidase_pln"/>
</dbReference>
<dbReference type="InterPro" id="IPR019794">
    <property type="entry name" value="Peroxidases_AS"/>
</dbReference>
<dbReference type="InterPro" id="IPR019793">
    <property type="entry name" value="Peroxidases_heam-ligand_BS"/>
</dbReference>
<dbReference type="InterPro" id="IPR033905">
    <property type="entry name" value="Secretory_peroxidase"/>
</dbReference>
<dbReference type="PANTHER" id="PTHR31388:SF139">
    <property type="entry name" value="PEROXIDASE 53"/>
    <property type="match status" value="1"/>
</dbReference>
<dbReference type="PANTHER" id="PTHR31388">
    <property type="entry name" value="PEROXIDASE 72-RELATED"/>
    <property type="match status" value="1"/>
</dbReference>
<dbReference type="Pfam" id="PF00141">
    <property type="entry name" value="peroxidase"/>
    <property type="match status" value="1"/>
</dbReference>
<dbReference type="PRINTS" id="PR00458">
    <property type="entry name" value="PEROXIDASE"/>
</dbReference>
<dbReference type="PRINTS" id="PR00461">
    <property type="entry name" value="PLPEROXIDASE"/>
</dbReference>
<dbReference type="SUPFAM" id="SSF48113">
    <property type="entry name" value="Heme-dependent peroxidases"/>
    <property type="match status" value="1"/>
</dbReference>
<dbReference type="PROSITE" id="PS00435">
    <property type="entry name" value="PEROXIDASE_1"/>
    <property type="match status" value="1"/>
</dbReference>
<dbReference type="PROSITE" id="PS00436">
    <property type="entry name" value="PEROXIDASE_2"/>
    <property type="match status" value="1"/>
</dbReference>
<dbReference type="PROSITE" id="PS50873">
    <property type="entry name" value="PEROXIDASE_4"/>
    <property type="match status" value="1"/>
</dbReference>
<accession>Q42578</accession>
<evidence type="ECO:0000255" key="1"/>
<evidence type="ECO:0000255" key="2">
    <source>
        <dbReference type="PROSITE-ProRule" id="PRU00297"/>
    </source>
</evidence>
<evidence type="ECO:0000269" key="3">
    <source>
    </source>
</evidence>
<evidence type="ECO:0000305" key="4"/>
<evidence type="ECO:0007829" key="5">
    <source>
        <dbReference type="PDB" id="1PA2"/>
    </source>
</evidence>
<feature type="signal peptide" evidence="1">
    <location>
        <begin position="1"/>
        <end position="30"/>
    </location>
</feature>
<feature type="chain" id="PRO_0000023718" description="Peroxidase 53">
    <location>
        <begin position="31"/>
        <end position="335"/>
    </location>
</feature>
<feature type="active site" description="Proton acceptor">
    <location>
        <position position="72"/>
    </location>
</feature>
<feature type="binding site">
    <location>
        <position position="73"/>
    </location>
    <ligand>
        <name>Ca(2+)</name>
        <dbReference type="ChEBI" id="CHEBI:29108"/>
        <label>1</label>
    </ligand>
</feature>
<feature type="binding site">
    <location>
        <position position="76"/>
    </location>
    <ligand>
        <name>Ca(2+)</name>
        <dbReference type="ChEBI" id="CHEBI:29108"/>
        <label>1</label>
    </ligand>
</feature>
<feature type="binding site">
    <location>
        <position position="78"/>
    </location>
    <ligand>
        <name>Ca(2+)</name>
        <dbReference type="ChEBI" id="CHEBI:29108"/>
        <label>1</label>
    </ligand>
</feature>
<feature type="binding site">
    <location>
        <position position="80"/>
    </location>
    <ligand>
        <name>Ca(2+)</name>
        <dbReference type="ChEBI" id="CHEBI:29108"/>
        <label>1</label>
    </ligand>
</feature>
<feature type="binding site">
    <location>
        <position position="82"/>
    </location>
    <ligand>
        <name>Ca(2+)</name>
        <dbReference type="ChEBI" id="CHEBI:29108"/>
        <label>1</label>
    </ligand>
</feature>
<feature type="binding site">
    <location>
        <position position="169"/>
    </location>
    <ligand>
        <name>substrate</name>
    </ligand>
</feature>
<feature type="binding site" description="axial binding residue" evidence="2">
    <location>
        <position position="199"/>
    </location>
    <ligand>
        <name>heme b</name>
        <dbReference type="ChEBI" id="CHEBI:60344"/>
    </ligand>
    <ligandPart>
        <name>Fe</name>
        <dbReference type="ChEBI" id="CHEBI:18248"/>
    </ligandPart>
</feature>
<feature type="binding site">
    <location>
        <position position="200"/>
    </location>
    <ligand>
        <name>Ca(2+)</name>
        <dbReference type="ChEBI" id="CHEBI:29108"/>
        <label>2</label>
    </ligand>
</feature>
<feature type="binding site">
    <location>
        <position position="251"/>
    </location>
    <ligand>
        <name>Ca(2+)</name>
        <dbReference type="ChEBI" id="CHEBI:29108"/>
        <label>2</label>
    </ligand>
</feature>
<feature type="binding site">
    <location>
        <position position="254"/>
    </location>
    <ligand>
        <name>Ca(2+)</name>
        <dbReference type="ChEBI" id="CHEBI:29108"/>
        <label>2</label>
    </ligand>
</feature>
<feature type="binding site">
    <location>
        <position position="259"/>
    </location>
    <ligand>
        <name>Ca(2+)</name>
        <dbReference type="ChEBI" id="CHEBI:29108"/>
        <label>2</label>
    </ligand>
</feature>
<feature type="site" description="Transition state stabilizer">
    <location>
        <position position="68"/>
    </location>
</feature>
<feature type="modified residue" description="Pyrrolidone carboxylic acid" evidence="2 3">
    <location>
        <position position="31"/>
    </location>
</feature>
<feature type="glycosylation site" description="N-linked (GlcNAc...) asparagine" evidence="1">
    <location>
        <position position="33"/>
    </location>
</feature>
<feature type="glycosylation site" description="N-linked (GlcNAc...) asparagine" evidence="1">
    <location>
        <position position="43"/>
    </location>
</feature>
<feature type="glycosylation site" description="N-linked (GlcNAc...) asparagine" evidence="1">
    <location>
        <position position="165"/>
    </location>
</feature>
<feature type="glycosylation site" description="N-linked (GlcNAc...) asparagine" evidence="1">
    <location>
        <position position="177"/>
    </location>
</feature>
<feature type="glycosylation site" description="N-linked (GlcNAc...) asparagine" evidence="1">
    <location>
        <position position="215"/>
    </location>
</feature>
<feature type="glycosylation site" description="N-linked (GlcNAc...) asparagine" evidence="1">
    <location>
        <position position="227"/>
    </location>
</feature>
<feature type="glycosylation site" description="N-linked (GlcNAc...) asparagine" evidence="1">
    <location>
        <position position="241"/>
    </location>
</feature>
<feature type="glycosylation site" description="N-linked (GlcNAc...) asparagine" evidence="1">
    <location>
        <position position="297"/>
    </location>
</feature>
<feature type="disulfide bond" evidence="2">
    <location>
        <begin position="41"/>
        <end position="121"/>
    </location>
</feature>
<feature type="disulfide bond" evidence="2">
    <location>
        <begin position="74"/>
        <end position="79"/>
    </location>
</feature>
<feature type="disulfide bond" evidence="2">
    <location>
        <begin position="127"/>
        <end position="329"/>
    </location>
</feature>
<feature type="disulfide bond" evidence="2">
    <location>
        <begin position="206"/>
        <end position="238"/>
    </location>
</feature>
<feature type="sequence conflict" description="In Ref. 5; AAM65211." evidence="4" ref="5">
    <original>V</original>
    <variation>L</variation>
    <location>
        <position position="21"/>
    </location>
</feature>
<feature type="sequence conflict" description="In Ref. 5; AAM65211." evidence="4" ref="5">
    <original>I</original>
    <variation>V</variation>
    <location>
        <position position="172"/>
    </location>
</feature>
<feature type="sequence conflict" description="In Ref. 5; AAM65211." evidence="4" ref="5">
    <original>F</original>
    <variation>S</variation>
    <location>
        <position position="180"/>
    </location>
</feature>
<feature type="sequence conflict" description="In Ref. 5; AAM65211." evidence="4" ref="5">
    <original>D</original>
    <variation>N</variation>
    <location>
        <position position="270"/>
    </location>
</feature>
<feature type="turn" evidence="5">
    <location>
        <begin position="34"/>
        <end position="40"/>
    </location>
</feature>
<feature type="helix" evidence="5">
    <location>
        <begin position="44"/>
        <end position="56"/>
    </location>
</feature>
<feature type="helix" evidence="5">
    <location>
        <begin position="62"/>
        <end position="74"/>
    </location>
</feature>
<feature type="turn" evidence="5">
    <location>
        <begin position="75"/>
        <end position="77"/>
    </location>
</feature>
<feature type="strand" evidence="5">
    <location>
        <begin position="78"/>
        <end position="81"/>
    </location>
</feature>
<feature type="helix" evidence="5">
    <location>
        <begin position="82"/>
        <end position="84"/>
    </location>
</feature>
<feature type="helix" evidence="5">
    <location>
        <begin position="94"/>
        <end position="96"/>
    </location>
</feature>
<feature type="turn" evidence="5">
    <location>
        <begin position="98"/>
        <end position="103"/>
    </location>
</feature>
<feature type="helix" evidence="5">
    <location>
        <begin position="107"/>
        <end position="120"/>
    </location>
</feature>
<feature type="turn" evidence="5">
    <location>
        <begin position="122"/>
        <end position="124"/>
    </location>
</feature>
<feature type="helix" evidence="5">
    <location>
        <begin position="127"/>
        <end position="141"/>
    </location>
</feature>
<feature type="helix" evidence="5">
    <location>
        <begin position="161"/>
        <end position="167"/>
    </location>
</feature>
<feature type="helix" evidence="5">
    <location>
        <begin position="175"/>
        <end position="184"/>
    </location>
</feature>
<feature type="helix" evidence="5">
    <location>
        <begin position="189"/>
        <end position="196"/>
    </location>
</feature>
<feature type="helix" evidence="5">
    <location>
        <begin position="197"/>
        <end position="200"/>
    </location>
</feature>
<feature type="strand" evidence="5">
    <location>
        <begin position="201"/>
        <end position="205"/>
    </location>
</feature>
<feature type="helix" evidence="5">
    <location>
        <begin position="206"/>
        <end position="208"/>
    </location>
</feature>
<feature type="helix" evidence="5">
    <location>
        <begin position="210"/>
        <end position="212"/>
    </location>
</feature>
<feature type="helix" evidence="5">
    <location>
        <begin position="216"/>
        <end position="218"/>
    </location>
</feature>
<feature type="strand" evidence="5">
    <location>
        <begin position="219"/>
        <end position="221"/>
    </location>
</feature>
<feature type="helix" evidence="5">
    <location>
        <begin position="228"/>
        <end position="237"/>
    </location>
</feature>
<feature type="strand" evidence="5">
    <location>
        <begin position="247"/>
        <end position="250"/>
    </location>
</feature>
<feature type="strand" evidence="5">
    <location>
        <begin position="252"/>
        <end position="257"/>
    </location>
</feature>
<feature type="helix" evidence="5">
    <location>
        <begin position="261"/>
        <end position="267"/>
    </location>
</feature>
<feature type="helix" evidence="5">
    <location>
        <begin position="274"/>
        <end position="281"/>
    </location>
</feature>
<feature type="helix" evidence="5">
    <location>
        <begin position="287"/>
        <end position="296"/>
    </location>
</feature>
<feature type="helix" evidence="5">
    <location>
        <begin position="298"/>
        <end position="313"/>
    </location>
</feature>
<feature type="strand" evidence="5">
    <location>
        <begin position="322"/>
        <end position="324"/>
    </location>
</feature>
<name>PER53_ARATH</name>
<organism>
    <name type="scientific">Arabidopsis thaliana</name>
    <name type="common">Mouse-ear cress</name>
    <dbReference type="NCBI Taxonomy" id="3702"/>
    <lineage>
        <taxon>Eukaryota</taxon>
        <taxon>Viridiplantae</taxon>
        <taxon>Streptophyta</taxon>
        <taxon>Embryophyta</taxon>
        <taxon>Tracheophyta</taxon>
        <taxon>Spermatophyta</taxon>
        <taxon>Magnoliopsida</taxon>
        <taxon>eudicotyledons</taxon>
        <taxon>Gunneridae</taxon>
        <taxon>Pentapetalae</taxon>
        <taxon>rosids</taxon>
        <taxon>malvids</taxon>
        <taxon>Brassicales</taxon>
        <taxon>Brassicaceae</taxon>
        <taxon>Camelineae</taxon>
        <taxon>Arabidopsis</taxon>
    </lineage>
</organism>
<gene>
    <name type="primary">PER53</name>
    <name type="synonym">P53</name>
    <name type="ordered locus">At5g06720</name>
    <name type="ORF">MPH15.8</name>
</gene>
<protein>
    <recommendedName>
        <fullName>Peroxidase 53</fullName>
        <shortName>Atperox P53</shortName>
        <ecNumber>1.11.1.7</ecNumber>
    </recommendedName>
    <alternativeName>
        <fullName>ATPA2</fullName>
    </alternativeName>
</protein>
<proteinExistence type="evidence at protein level"/>